<dbReference type="SMR" id="C0HL37"/>
<dbReference type="GO" id="GO:0006952">
    <property type="term" value="P:defense response"/>
    <property type="evidence" value="ECO:0007669"/>
    <property type="project" value="UniProtKB-KW"/>
</dbReference>
<dbReference type="InterPro" id="IPR005535">
    <property type="entry name" value="Cyclotide"/>
</dbReference>
<dbReference type="InterPro" id="IPR036146">
    <property type="entry name" value="Cyclotide_sf"/>
</dbReference>
<dbReference type="Pfam" id="PF03784">
    <property type="entry name" value="Cyclotide"/>
    <property type="match status" value="1"/>
</dbReference>
<dbReference type="SUPFAM" id="SSF57038">
    <property type="entry name" value="Cyclotides"/>
    <property type="match status" value="1"/>
</dbReference>
<dbReference type="PROSITE" id="PS51052">
    <property type="entry name" value="CYCLOTIDE"/>
    <property type="match status" value="1"/>
</dbReference>
<feature type="peptide" id="PRO_0000441832" description="Cyclotide glopa C" evidence="2">
    <location>
        <begin position="1"/>
        <end position="31"/>
    </location>
</feature>
<feature type="disulfide bond" evidence="1">
    <location>
        <begin position="6"/>
        <end position="21"/>
    </location>
</feature>
<feature type="disulfide bond" evidence="1">
    <location>
        <begin position="10"/>
        <end position="23"/>
    </location>
</feature>
<feature type="disulfide bond" evidence="1">
    <location>
        <begin position="16"/>
        <end position="28"/>
    </location>
</feature>
<feature type="cross-link" description="Cyclopeptide (Gly-Asn)" evidence="3">
    <location>
        <begin position="1"/>
        <end position="31"/>
    </location>
</feature>
<reference evidence="4" key="1">
    <citation type="journal article" date="2010" name="Phytochemistry">
        <title>Cyclotide proteins and precursors from the genus Gloeospermum: filling a blank spot in the cyclotide map of Violaceae.</title>
        <authorList>
            <person name="Burman R."/>
            <person name="Gruber C.W."/>
            <person name="Rizzardi K."/>
            <person name="Herrmann A."/>
            <person name="Craik D.J."/>
            <person name="Gupta M.P."/>
            <person name="Goransson U."/>
        </authorList>
    </citation>
    <scope>PROTEIN SEQUENCE</scope>
    <scope>MASS SPECTROMETRY</scope>
    <scope>IDENTIFICATION BY MASS SPECTROMETRY</scope>
    <scope>CYCLIZATION</scope>
    <scope>PRESENCE OF DISULFIDE BONDS</scope>
    <source>
        <tissue evidence="3">Leaf</tissue>
    </source>
</reference>
<protein>
    <recommendedName>
        <fullName evidence="3">Cyclotide glopa C</fullName>
    </recommendedName>
</protein>
<sequence>GDLPICGETCFEGGNCRIPGCTCVWPFCSKN</sequence>
<organism evidence="3">
    <name type="scientific">Gloeospermum pauciflorum</name>
    <dbReference type="NCBI Taxonomy" id="685569"/>
    <lineage>
        <taxon>Eukaryota</taxon>
        <taxon>Viridiplantae</taxon>
        <taxon>Streptophyta</taxon>
        <taxon>Embryophyta</taxon>
        <taxon>Tracheophyta</taxon>
        <taxon>Spermatophyta</taxon>
        <taxon>Magnoliopsida</taxon>
        <taxon>eudicotyledons</taxon>
        <taxon>Gunneridae</taxon>
        <taxon>Pentapetalae</taxon>
        <taxon>rosids</taxon>
        <taxon>fabids</taxon>
        <taxon>Malpighiales</taxon>
        <taxon>Violaceae</taxon>
        <taxon>Gloeospermum</taxon>
    </lineage>
</organism>
<accession>C0HL37</accession>
<name>CYGPC_GLOPU</name>
<comment type="function">
    <text evidence="1">Probably participates in a plant defense mechanism.</text>
</comment>
<comment type="domain">
    <text evidence="4">The presence of a 'disulfide through disulfide knot' structurally defines this protein as a knottin.</text>
</comment>
<comment type="PTM">
    <text evidence="1 2">This is a cyclic peptide.</text>
</comment>
<comment type="mass spectrometry"/>
<comment type="similarity">
    <text evidence="5">Belongs to the cyclotide family. Moebius subfamily.</text>
</comment>
<comment type="caution">
    <text evidence="1">This peptide is cyclic. The start position was chosen by similarity to Oak1 (kalata B1) for which the DNA sequence is known.</text>
</comment>
<keyword id="KW-0903">Direct protein sequencing</keyword>
<keyword id="KW-1015">Disulfide bond</keyword>
<keyword id="KW-0960">Knottin</keyword>
<keyword id="KW-0611">Plant defense</keyword>
<proteinExistence type="evidence at protein level"/>
<evidence type="ECO:0000255" key="1">
    <source>
        <dbReference type="PROSITE-ProRule" id="PRU00395"/>
    </source>
</evidence>
<evidence type="ECO:0000269" key="2">
    <source>
    </source>
</evidence>
<evidence type="ECO:0000303" key="3">
    <source>
    </source>
</evidence>
<evidence type="ECO:0000305" key="4"/>
<evidence type="ECO:0000305" key="5">
    <source>
    </source>
</evidence>